<organism>
    <name type="scientific">Salmonella typhimurium (strain LT2 / SGSC1412 / ATCC 700720)</name>
    <dbReference type="NCBI Taxonomy" id="99287"/>
    <lineage>
        <taxon>Bacteria</taxon>
        <taxon>Pseudomonadati</taxon>
        <taxon>Pseudomonadota</taxon>
        <taxon>Gammaproteobacteria</taxon>
        <taxon>Enterobacterales</taxon>
        <taxon>Enterobacteriaceae</taxon>
        <taxon>Salmonella</taxon>
    </lineage>
</organism>
<name>KBL_SALTY</name>
<protein>
    <recommendedName>
        <fullName evidence="1">2-amino-3-ketobutyrate coenzyme A ligase</fullName>
        <shortName evidence="1">AKB ligase</shortName>
        <shortName>KBL</shortName>
        <ecNumber evidence="1">2.3.1.29</ecNumber>
    </recommendedName>
    <alternativeName>
        <fullName evidence="1">Glycine acetyltransferase</fullName>
    </alternativeName>
</protein>
<proteinExistence type="inferred from homology"/>
<evidence type="ECO:0000255" key="1">
    <source>
        <dbReference type="HAMAP-Rule" id="MF_00985"/>
    </source>
</evidence>
<comment type="function">
    <text evidence="1">Catalyzes the cleavage of 2-amino-3-ketobutyrate to glycine and acetyl-CoA.</text>
</comment>
<comment type="catalytic activity">
    <reaction evidence="1">
        <text>glycine + acetyl-CoA = (2S)-2-amino-3-oxobutanoate + CoA</text>
        <dbReference type="Rhea" id="RHEA:20736"/>
        <dbReference type="ChEBI" id="CHEBI:57287"/>
        <dbReference type="ChEBI" id="CHEBI:57288"/>
        <dbReference type="ChEBI" id="CHEBI:57305"/>
        <dbReference type="ChEBI" id="CHEBI:78948"/>
        <dbReference type="EC" id="2.3.1.29"/>
    </reaction>
</comment>
<comment type="cofactor">
    <cofactor evidence="1">
        <name>pyridoxal 5'-phosphate</name>
        <dbReference type="ChEBI" id="CHEBI:597326"/>
    </cofactor>
    <text evidence="1">Binds 1 pyridoxal phosphate per subunit.</text>
</comment>
<comment type="pathway">
    <text evidence="1">Amino-acid degradation; L-threonine degradation via oxydo-reductase pathway; glycine from L-threonine: step 2/2.</text>
</comment>
<comment type="subunit">
    <text evidence="1">Homodimer.</text>
</comment>
<comment type="similarity">
    <text evidence="1">Belongs to the class-II pyridoxal-phosphate-dependent aminotransferase family.</text>
</comment>
<dbReference type="EC" id="2.3.1.29" evidence="1"/>
<dbReference type="EMBL" id="AE006468">
    <property type="protein sequence ID" value="AAL22568.1"/>
    <property type="molecule type" value="Genomic_DNA"/>
</dbReference>
<dbReference type="EMBL" id="U06472">
    <property type="protein sequence ID" value="AAA59063.1"/>
    <property type="molecule type" value="Genomic_DNA"/>
</dbReference>
<dbReference type="RefSeq" id="NP_462609.1">
    <property type="nucleotide sequence ID" value="NC_003197.2"/>
</dbReference>
<dbReference type="RefSeq" id="WP_001213790.1">
    <property type="nucleotide sequence ID" value="NC_003197.2"/>
</dbReference>
<dbReference type="SMR" id="P37419"/>
<dbReference type="STRING" id="99287.STM3709"/>
<dbReference type="PaxDb" id="99287-STM3709"/>
<dbReference type="GeneID" id="1255233"/>
<dbReference type="KEGG" id="stm:STM3709"/>
<dbReference type="PATRIC" id="fig|99287.12.peg.3923"/>
<dbReference type="HOGENOM" id="CLU_015846_11_0_6"/>
<dbReference type="OMA" id="GTHEYCD"/>
<dbReference type="PhylomeDB" id="P37419"/>
<dbReference type="BioCyc" id="SENT99287:STM3709-MONOMER"/>
<dbReference type="UniPathway" id="UPA00046">
    <property type="reaction ID" value="UER00506"/>
</dbReference>
<dbReference type="Proteomes" id="UP000001014">
    <property type="component" value="Chromosome"/>
</dbReference>
<dbReference type="GO" id="GO:0005829">
    <property type="term" value="C:cytosol"/>
    <property type="evidence" value="ECO:0000318"/>
    <property type="project" value="GO_Central"/>
</dbReference>
<dbReference type="GO" id="GO:0008890">
    <property type="term" value="F:glycine C-acetyltransferase activity"/>
    <property type="evidence" value="ECO:0000318"/>
    <property type="project" value="GO_Central"/>
</dbReference>
<dbReference type="GO" id="GO:0030170">
    <property type="term" value="F:pyridoxal phosphate binding"/>
    <property type="evidence" value="ECO:0007669"/>
    <property type="project" value="UniProtKB-UniRule"/>
</dbReference>
<dbReference type="GO" id="GO:0009058">
    <property type="term" value="P:biosynthetic process"/>
    <property type="evidence" value="ECO:0007669"/>
    <property type="project" value="InterPro"/>
</dbReference>
<dbReference type="GO" id="GO:0019518">
    <property type="term" value="P:L-threonine catabolic process to glycine"/>
    <property type="evidence" value="ECO:0007669"/>
    <property type="project" value="UniProtKB-UniRule"/>
</dbReference>
<dbReference type="CDD" id="cd06454">
    <property type="entry name" value="KBL_like"/>
    <property type="match status" value="1"/>
</dbReference>
<dbReference type="FunFam" id="3.90.1150.10:FF:000004">
    <property type="entry name" value="2-amino-3-ketobutyrate coenzyme A ligase"/>
    <property type="match status" value="1"/>
</dbReference>
<dbReference type="FunFam" id="3.40.640.10:FF:000006">
    <property type="entry name" value="5-aminolevulinate synthase, mitochondrial"/>
    <property type="match status" value="1"/>
</dbReference>
<dbReference type="Gene3D" id="3.90.1150.10">
    <property type="entry name" value="Aspartate Aminotransferase, domain 1"/>
    <property type="match status" value="1"/>
</dbReference>
<dbReference type="Gene3D" id="3.40.640.10">
    <property type="entry name" value="Type I PLP-dependent aspartate aminotransferase-like (Major domain)"/>
    <property type="match status" value="1"/>
</dbReference>
<dbReference type="HAMAP" id="MF_00985">
    <property type="entry name" value="2am3keto_CoA_ligase"/>
    <property type="match status" value="1"/>
</dbReference>
<dbReference type="InterPro" id="IPR011282">
    <property type="entry name" value="2am3keto_CoA_ligase"/>
</dbReference>
<dbReference type="InterPro" id="IPR001917">
    <property type="entry name" value="Aminotrans_II_pyridoxalP_BS"/>
</dbReference>
<dbReference type="InterPro" id="IPR004839">
    <property type="entry name" value="Aminotransferase_I/II_large"/>
</dbReference>
<dbReference type="InterPro" id="IPR050087">
    <property type="entry name" value="AON_synthase_class-II"/>
</dbReference>
<dbReference type="InterPro" id="IPR015424">
    <property type="entry name" value="PyrdxlP-dep_Trfase"/>
</dbReference>
<dbReference type="InterPro" id="IPR015421">
    <property type="entry name" value="PyrdxlP-dep_Trfase_major"/>
</dbReference>
<dbReference type="InterPro" id="IPR015422">
    <property type="entry name" value="PyrdxlP-dep_Trfase_small"/>
</dbReference>
<dbReference type="NCBIfam" id="TIGR01822">
    <property type="entry name" value="2am3keto_CoA"/>
    <property type="match status" value="1"/>
</dbReference>
<dbReference type="NCBIfam" id="NF005394">
    <property type="entry name" value="PRK06939.1"/>
    <property type="match status" value="1"/>
</dbReference>
<dbReference type="PANTHER" id="PTHR13693:SF102">
    <property type="entry name" value="2-AMINO-3-KETOBUTYRATE COENZYME A LIGASE, MITOCHONDRIAL"/>
    <property type="match status" value="1"/>
</dbReference>
<dbReference type="PANTHER" id="PTHR13693">
    <property type="entry name" value="CLASS II AMINOTRANSFERASE/8-AMINO-7-OXONONANOATE SYNTHASE"/>
    <property type="match status" value="1"/>
</dbReference>
<dbReference type="Pfam" id="PF00155">
    <property type="entry name" value="Aminotran_1_2"/>
    <property type="match status" value="1"/>
</dbReference>
<dbReference type="SUPFAM" id="SSF53383">
    <property type="entry name" value="PLP-dependent transferases"/>
    <property type="match status" value="1"/>
</dbReference>
<dbReference type="PROSITE" id="PS00599">
    <property type="entry name" value="AA_TRANSFER_CLASS_2"/>
    <property type="match status" value="1"/>
</dbReference>
<reference key="1">
    <citation type="journal article" date="2001" name="Nature">
        <title>Complete genome sequence of Salmonella enterica serovar Typhimurium LT2.</title>
        <authorList>
            <person name="McClelland M."/>
            <person name="Sanderson K.E."/>
            <person name="Spieth J."/>
            <person name="Clifton S.W."/>
            <person name="Latreille P."/>
            <person name="Courtney L."/>
            <person name="Porwollik S."/>
            <person name="Ali J."/>
            <person name="Dante M."/>
            <person name="Du F."/>
            <person name="Hou S."/>
            <person name="Layman D."/>
            <person name="Leonard S."/>
            <person name="Nguyen C."/>
            <person name="Scott K."/>
            <person name="Holmes A."/>
            <person name="Grewal N."/>
            <person name="Mulvaney E."/>
            <person name="Ryan E."/>
            <person name="Sun H."/>
            <person name="Florea L."/>
            <person name="Miller W."/>
            <person name="Stoneking T."/>
            <person name="Nhan M."/>
            <person name="Waterston R."/>
            <person name="Wilson R.K."/>
        </authorList>
    </citation>
    <scope>NUCLEOTIDE SEQUENCE [LARGE SCALE GENOMIC DNA]</scope>
    <source>
        <strain>LT2 / SGSC1412 / ATCC 700720</strain>
    </source>
</reference>
<reference key="2">
    <citation type="journal article" date="1994" name="J. Bacteriol.">
        <title>Molecular analysis of the rfaD gene, for heptose synthesis, and the rfaF gene, for heptose transfer, in lipopolysaccharide synthesis in Salmonella typhimurium.</title>
        <authorList>
            <person name="Sirisena D.M."/>
            <person name="Maclachlan P.R."/>
            <person name="Liu S.L."/>
            <person name="Hessel A."/>
            <person name="Sanderson K.E."/>
        </authorList>
    </citation>
    <scope>NUCLEOTIDE SEQUENCE [GENOMIC DNA] OF 1-162</scope>
    <source>
        <strain>LT2</strain>
    </source>
</reference>
<sequence length="398" mass="43031">MRGDFYKQLTNDLETARAEGLFKEERIITSAQQADITVADGSHVINFCANNYLGLANHPELINAAKAGMDSHGFGMASVRFICGTQDSHKALEQKLASFLGMEDAILYSSCFDANGGLFETLLGAEDAIISDALNHASIIDGVRLCKAKRYRYANNDMAELEARLKEAREAGARHVLIATDGVFSMDGVIANLKGVCDLADKYDALVMVDDSHAVGFVGENGRGSHEYCDVMGRVDIITGTLGKALGGASGGYTAARKEVVEWLRQRSRPYLFSNSLAPAIVAASIKVLEMVEAGAELRDRLWANARQFREQMSAAGFTLAGADHAIIPVMLGDAVVAQKFARELQKEGIYVTGFFYPVVPKGQARIRTQMSAAHTPEQITRAVDAFTRIGKQLGVIA</sequence>
<gene>
    <name evidence="1" type="primary">kbl</name>
    <name type="ordered locus">STM3709</name>
</gene>
<keyword id="KW-0012">Acyltransferase</keyword>
<keyword id="KW-0663">Pyridoxal phosphate</keyword>
<keyword id="KW-1185">Reference proteome</keyword>
<keyword id="KW-0808">Transferase</keyword>
<accession>P37419</accession>
<feature type="chain" id="PRO_0000163845" description="2-amino-3-ketobutyrate coenzyme A ligase">
    <location>
        <begin position="1"/>
        <end position="398"/>
    </location>
</feature>
<feature type="binding site" description="in other chain" evidence="1">
    <location>
        <begin position="111"/>
        <end position="112"/>
    </location>
    <ligand>
        <name>pyridoxal 5'-phosphate</name>
        <dbReference type="ChEBI" id="CHEBI:597326"/>
        <note>ligand shared between dimeric partners</note>
    </ligand>
</feature>
<feature type="binding site" evidence="1">
    <location>
        <position position="136"/>
    </location>
    <ligand>
        <name>substrate</name>
    </ligand>
</feature>
<feature type="binding site" description="in other chain" evidence="1">
    <location>
        <position position="185"/>
    </location>
    <ligand>
        <name>pyridoxal 5'-phosphate</name>
        <dbReference type="ChEBI" id="CHEBI:597326"/>
        <note>ligand shared between dimeric partners</note>
    </ligand>
</feature>
<feature type="binding site" description="in other chain" evidence="1">
    <location>
        <begin position="210"/>
        <end position="213"/>
    </location>
    <ligand>
        <name>pyridoxal 5'-phosphate</name>
        <dbReference type="ChEBI" id="CHEBI:597326"/>
        <note>ligand shared between dimeric partners</note>
    </ligand>
</feature>
<feature type="binding site" description="in other chain" evidence="1">
    <location>
        <begin position="241"/>
        <end position="244"/>
    </location>
    <ligand>
        <name>pyridoxal 5'-phosphate</name>
        <dbReference type="ChEBI" id="CHEBI:597326"/>
        <note>ligand shared between dimeric partners</note>
    </ligand>
</feature>
<feature type="binding site" evidence="1">
    <location>
        <begin position="274"/>
        <end position="275"/>
    </location>
    <ligand>
        <name>pyridoxal 5'-phosphate</name>
        <dbReference type="ChEBI" id="CHEBI:597326"/>
        <note>ligand shared between dimeric partners</note>
    </ligand>
</feature>
<feature type="binding site" evidence="1">
    <location>
        <position position="368"/>
    </location>
    <ligand>
        <name>substrate</name>
    </ligand>
</feature>
<feature type="modified residue" description="N6-(pyridoxal phosphate)lysine" evidence="1">
    <location>
        <position position="244"/>
    </location>
</feature>